<gene>
    <name type="primary">lig4</name>
    <name type="ORF">AFUA_5G12050</name>
</gene>
<dbReference type="EC" id="6.5.1.1" evidence="2"/>
<dbReference type="EMBL" id="AAHF01000003">
    <property type="protein sequence ID" value="EAL91408.1"/>
    <property type="molecule type" value="Genomic_DNA"/>
</dbReference>
<dbReference type="RefSeq" id="XP_753446.1">
    <property type="nucleotide sequence ID" value="XM_748353.1"/>
</dbReference>
<dbReference type="SMR" id="Q4WVG8"/>
<dbReference type="FunCoup" id="Q4WVG8">
    <property type="interactions" value="583"/>
</dbReference>
<dbReference type="STRING" id="330879.Q4WVG8"/>
<dbReference type="EnsemblFungi" id="EAL91408">
    <property type="protein sequence ID" value="EAL91408"/>
    <property type="gene ID" value="AFUA_5G12050"/>
</dbReference>
<dbReference type="GeneID" id="3511447"/>
<dbReference type="KEGG" id="afm:AFUA_5G12050"/>
<dbReference type="eggNOG" id="KOG0966">
    <property type="taxonomic scope" value="Eukaryota"/>
</dbReference>
<dbReference type="HOGENOM" id="CLU_004844_1_1_1"/>
<dbReference type="InParanoid" id="Q4WVG8"/>
<dbReference type="OMA" id="EGIMIKH"/>
<dbReference type="OrthoDB" id="151490at2759"/>
<dbReference type="Proteomes" id="UP000002530">
    <property type="component" value="Chromosome 5"/>
</dbReference>
<dbReference type="GO" id="GO:0000785">
    <property type="term" value="C:chromatin"/>
    <property type="evidence" value="ECO:0007669"/>
    <property type="project" value="EnsemblFungi"/>
</dbReference>
<dbReference type="GO" id="GO:0032807">
    <property type="term" value="C:DNA ligase IV complex"/>
    <property type="evidence" value="ECO:0000318"/>
    <property type="project" value="GO_Central"/>
</dbReference>
<dbReference type="GO" id="GO:0005730">
    <property type="term" value="C:nucleolus"/>
    <property type="evidence" value="ECO:0007669"/>
    <property type="project" value="EnsemblFungi"/>
</dbReference>
<dbReference type="GO" id="GO:0005524">
    <property type="term" value="F:ATP binding"/>
    <property type="evidence" value="ECO:0000318"/>
    <property type="project" value="GO_Central"/>
</dbReference>
<dbReference type="GO" id="GO:0003677">
    <property type="term" value="F:DNA binding"/>
    <property type="evidence" value="ECO:0000318"/>
    <property type="project" value="GO_Central"/>
</dbReference>
<dbReference type="GO" id="GO:0003910">
    <property type="term" value="F:DNA ligase (ATP) activity"/>
    <property type="evidence" value="ECO:0000250"/>
    <property type="project" value="UniProtKB"/>
</dbReference>
<dbReference type="GO" id="GO:0046872">
    <property type="term" value="F:metal ion binding"/>
    <property type="evidence" value="ECO:0007669"/>
    <property type="project" value="UniProtKB-KW"/>
</dbReference>
<dbReference type="GO" id="GO:0071897">
    <property type="term" value="P:DNA biosynthetic process"/>
    <property type="evidence" value="ECO:0007669"/>
    <property type="project" value="InterPro"/>
</dbReference>
<dbReference type="GO" id="GO:0006310">
    <property type="term" value="P:DNA recombination"/>
    <property type="evidence" value="ECO:0007669"/>
    <property type="project" value="UniProtKB-KW"/>
</dbReference>
<dbReference type="GO" id="GO:0097680">
    <property type="term" value="P:double-strand break repair via classical nonhomologous end joining"/>
    <property type="evidence" value="ECO:0000250"/>
    <property type="project" value="UniProtKB"/>
</dbReference>
<dbReference type="GO" id="GO:0006303">
    <property type="term" value="P:double-strand break repair via nonhomologous end joining"/>
    <property type="evidence" value="ECO:0000318"/>
    <property type="project" value="GO_Central"/>
</dbReference>
<dbReference type="GO" id="GO:0006297">
    <property type="term" value="P:nucleotide-excision repair, DNA gap filling"/>
    <property type="evidence" value="ECO:0000318"/>
    <property type="project" value="GO_Central"/>
</dbReference>
<dbReference type="CDD" id="cd07903">
    <property type="entry name" value="Adenylation_DNA_ligase_IV"/>
    <property type="match status" value="1"/>
</dbReference>
<dbReference type="CDD" id="cd17722">
    <property type="entry name" value="BRCT_DNA_ligase_IV_rpt1"/>
    <property type="match status" value="1"/>
</dbReference>
<dbReference type="CDD" id="cd07968">
    <property type="entry name" value="OBF_DNA_ligase_IV"/>
    <property type="match status" value="1"/>
</dbReference>
<dbReference type="FunFam" id="2.40.50.140:FF:000234">
    <property type="entry name" value="DNA ligase"/>
    <property type="match status" value="1"/>
</dbReference>
<dbReference type="FunFam" id="3.30.470.30:FF:000013">
    <property type="entry name" value="DNA ligase"/>
    <property type="match status" value="1"/>
</dbReference>
<dbReference type="FunFam" id="3.40.50.10190:FF:000084">
    <property type="entry name" value="DNA ligase"/>
    <property type="match status" value="1"/>
</dbReference>
<dbReference type="FunFam" id="1.10.3260.10:FF:000008">
    <property type="entry name" value="DNA ligase 4"/>
    <property type="match status" value="1"/>
</dbReference>
<dbReference type="Gene3D" id="3.40.50.10190">
    <property type="entry name" value="BRCT domain"/>
    <property type="match status" value="2"/>
</dbReference>
<dbReference type="Gene3D" id="1.10.3260.10">
    <property type="entry name" value="DNA ligase, ATP-dependent, N-terminal domain"/>
    <property type="match status" value="1"/>
</dbReference>
<dbReference type="Gene3D" id="3.30.470.30">
    <property type="entry name" value="DNA ligase/mRNA capping enzyme"/>
    <property type="match status" value="1"/>
</dbReference>
<dbReference type="Gene3D" id="2.40.50.140">
    <property type="entry name" value="Nucleic acid-binding proteins"/>
    <property type="match status" value="1"/>
</dbReference>
<dbReference type="InterPro" id="IPR044125">
    <property type="entry name" value="Adenylation_DNA_ligase_IV"/>
</dbReference>
<dbReference type="InterPro" id="IPR001357">
    <property type="entry name" value="BRCT_dom"/>
</dbReference>
<dbReference type="InterPro" id="IPR036420">
    <property type="entry name" value="BRCT_dom_sf"/>
</dbReference>
<dbReference type="InterPro" id="IPR000977">
    <property type="entry name" value="DNA_ligase_ATP-dep"/>
</dbReference>
<dbReference type="InterPro" id="IPR012309">
    <property type="entry name" value="DNA_ligase_ATP-dep_C"/>
</dbReference>
<dbReference type="InterPro" id="IPR012310">
    <property type="entry name" value="DNA_ligase_ATP-dep_cent"/>
</dbReference>
<dbReference type="InterPro" id="IPR016059">
    <property type="entry name" value="DNA_ligase_ATP-dep_CS"/>
</dbReference>
<dbReference type="InterPro" id="IPR012308">
    <property type="entry name" value="DNA_ligase_ATP-dep_N"/>
</dbReference>
<dbReference type="InterPro" id="IPR036599">
    <property type="entry name" value="DNA_ligase_N_sf"/>
</dbReference>
<dbReference type="InterPro" id="IPR029710">
    <property type="entry name" value="LIG4"/>
</dbReference>
<dbReference type="InterPro" id="IPR012340">
    <property type="entry name" value="NA-bd_OB-fold"/>
</dbReference>
<dbReference type="NCBIfam" id="TIGR00574">
    <property type="entry name" value="dnl1"/>
    <property type="match status" value="1"/>
</dbReference>
<dbReference type="PANTHER" id="PTHR45997">
    <property type="entry name" value="DNA LIGASE 4"/>
    <property type="match status" value="1"/>
</dbReference>
<dbReference type="PANTHER" id="PTHR45997:SF1">
    <property type="entry name" value="DNA LIGASE 4"/>
    <property type="match status" value="1"/>
</dbReference>
<dbReference type="Pfam" id="PF16589">
    <property type="entry name" value="BRCT_2"/>
    <property type="match status" value="1"/>
</dbReference>
<dbReference type="Pfam" id="PF04679">
    <property type="entry name" value="DNA_ligase_A_C"/>
    <property type="match status" value="1"/>
</dbReference>
<dbReference type="Pfam" id="PF01068">
    <property type="entry name" value="DNA_ligase_A_M"/>
    <property type="match status" value="1"/>
</dbReference>
<dbReference type="Pfam" id="PF04675">
    <property type="entry name" value="DNA_ligase_A_N"/>
    <property type="match status" value="1"/>
</dbReference>
<dbReference type="SMART" id="SM00292">
    <property type="entry name" value="BRCT"/>
    <property type="match status" value="1"/>
</dbReference>
<dbReference type="SUPFAM" id="SSF52113">
    <property type="entry name" value="BRCT domain"/>
    <property type="match status" value="2"/>
</dbReference>
<dbReference type="SUPFAM" id="SSF56091">
    <property type="entry name" value="DNA ligase/mRNA capping enzyme, catalytic domain"/>
    <property type="match status" value="1"/>
</dbReference>
<dbReference type="SUPFAM" id="SSF50249">
    <property type="entry name" value="Nucleic acid-binding proteins"/>
    <property type="match status" value="1"/>
</dbReference>
<dbReference type="PROSITE" id="PS50172">
    <property type="entry name" value="BRCT"/>
    <property type="match status" value="1"/>
</dbReference>
<dbReference type="PROSITE" id="PS00697">
    <property type="entry name" value="DNA_LIGASE_A1"/>
    <property type="match status" value="1"/>
</dbReference>
<dbReference type="PROSITE" id="PS50160">
    <property type="entry name" value="DNA_LIGASE_A3"/>
    <property type="match status" value="1"/>
</dbReference>
<reference key="1">
    <citation type="journal article" date="2005" name="Nature">
        <title>Genomic sequence of the pathogenic and allergenic filamentous fungus Aspergillus fumigatus.</title>
        <authorList>
            <person name="Nierman W.C."/>
            <person name="Pain A."/>
            <person name="Anderson M.J."/>
            <person name="Wortman J.R."/>
            <person name="Kim H.S."/>
            <person name="Arroyo J."/>
            <person name="Berriman M."/>
            <person name="Abe K."/>
            <person name="Archer D.B."/>
            <person name="Bermejo C."/>
            <person name="Bennett J.W."/>
            <person name="Bowyer P."/>
            <person name="Chen D."/>
            <person name="Collins M."/>
            <person name="Coulsen R."/>
            <person name="Davies R."/>
            <person name="Dyer P.S."/>
            <person name="Farman M.L."/>
            <person name="Fedorova N."/>
            <person name="Fedorova N.D."/>
            <person name="Feldblyum T.V."/>
            <person name="Fischer R."/>
            <person name="Fosker N."/>
            <person name="Fraser A."/>
            <person name="Garcia J.L."/>
            <person name="Garcia M.J."/>
            <person name="Goble A."/>
            <person name="Goldman G.H."/>
            <person name="Gomi K."/>
            <person name="Griffith-Jones S."/>
            <person name="Gwilliam R."/>
            <person name="Haas B.J."/>
            <person name="Haas H."/>
            <person name="Harris D.E."/>
            <person name="Horiuchi H."/>
            <person name="Huang J."/>
            <person name="Humphray S."/>
            <person name="Jimenez J."/>
            <person name="Keller N."/>
            <person name="Khouri H."/>
            <person name="Kitamoto K."/>
            <person name="Kobayashi T."/>
            <person name="Konzack S."/>
            <person name="Kulkarni R."/>
            <person name="Kumagai T."/>
            <person name="Lafton A."/>
            <person name="Latge J.-P."/>
            <person name="Li W."/>
            <person name="Lord A."/>
            <person name="Lu C."/>
            <person name="Majoros W.H."/>
            <person name="May G.S."/>
            <person name="Miller B.L."/>
            <person name="Mohamoud Y."/>
            <person name="Molina M."/>
            <person name="Monod M."/>
            <person name="Mouyna I."/>
            <person name="Mulligan S."/>
            <person name="Murphy L.D."/>
            <person name="O'Neil S."/>
            <person name="Paulsen I."/>
            <person name="Penalva M.A."/>
            <person name="Pertea M."/>
            <person name="Price C."/>
            <person name="Pritchard B.L."/>
            <person name="Quail M.A."/>
            <person name="Rabbinowitsch E."/>
            <person name="Rawlins N."/>
            <person name="Rajandream M.A."/>
            <person name="Reichard U."/>
            <person name="Renauld H."/>
            <person name="Robson G.D."/>
            <person name="Rodriguez de Cordoba S."/>
            <person name="Rodriguez-Pena J.M."/>
            <person name="Ronning C.M."/>
            <person name="Rutter S."/>
            <person name="Salzberg S.L."/>
            <person name="Sanchez M."/>
            <person name="Sanchez-Ferrero J.C."/>
            <person name="Saunders D."/>
            <person name="Seeger K."/>
            <person name="Squares R."/>
            <person name="Squares S."/>
            <person name="Takeuchi M."/>
            <person name="Tekaia F."/>
            <person name="Turner G."/>
            <person name="Vazquez de Aldana C.R."/>
            <person name="Weidman J."/>
            <person name="White O."/>
            <person name="Woodward J.R."/>
            <person name="Yu J.-H."/>
            <person name="Fraser C.M."/>
            <person name="Galagan J.E."/>
            <person name="Asai K."/>
            <person name="Machida M."/>
            <person name="Hall N."/>
            <person name="Barrell B.G."/>
            <person name="Denning D.W."/>
        </authorList>
    </citation>
    <scope>NUCLEOTIDE SEQUENCE [LARGE SCALE GENOMIC DNA]</scope>
    <source>
        <strain>ATCC MYA-4609 / CBS 101355 / FGSC A1100 / Af293</strain>
    </source>
</reference>
<protein>
    <recommendedName>
        <fullName>DNA ligase 4</fullName>
        <ecNumber evidence="2">6.5.1.1</ecNumber>
    </recommendedName>
    <alternativeName>
        <fullName>DNA ligase IV</fullName>
    </alternativeName>
    <alternativeName>
        <fullName>Polydeoxyribonucleotide synthase [ATP] 4</fullName>
    </alternativeName>
</protein>
<name>DNLI4_ASPFU</name>
<proteinExistence type="inferred from homology"/>
<sequence length="979" mass="111878">MDSDEIMPDEEHPNVPVGDEESDIDEKYPNRPRNHSPTLPFHELFQTLFNPLGEIKKKPAGAVAARRKVGPHGQSAANLNPLERRRDVIERFISRWRKEVGDDIYPAFRLILPDKDRDRAMYGIKEKAIGKMLVKIMKIDKNSEDGFNLLNWKLPGQAATSRMTGDFAGRCFDVISKRPMRTDVGDMLIEEVNEKLDKLSAASKEEQQLPILAEFYRRMNPEELMWLIRIILRQMKVGATERTFFDVWHPDAENLYSISSSLRRVCWELHDPNIRLDAEDRGISLMQCFQPQLAQFQMDSLDRMVARMRPTEEDPVFWIEEKLDGERMQLHMASDDSVPGGRRFRFWSRKAKEYTYLYGNGIYDENGSLTRYLKDAFADGVQSLILDGEMITWDPEQDAPAPFGTLKTAALSEQRNPFSTTGARPLLRVFDILYLNGRDLTGYTLRDRRKALQKAVRPVHRRFEIHPYEEATTKDQVEAALRKVVAEASEGLVLKNPRSPYRLNERHDDWMKVKPEYMTEFGESLDLIVIGGYYGSGRRGGNLSSFLCGLRVDDGHASQGASASKCYSFCKVGGGFNAADYANIRHHTDGKWMEWNPKKPPTAYIELAGRDAQYERPDMWIKPEDSVVICVKAASVSASDQFRLGLTLRFPRFKRLRMDKDWKSALSVQEFLDLKSNVEQEHREKELNVDNSRRKRVKRTAKKPLTVAGYDMDEDVKYAGPSGHIFDGLNFYILTDSSAPIKKTKPELEQLVKANGGMFFQTNNAAPHTICVADRRTVKAASLQKRGDVDIIRPSWIIDCVKQNEIDAGLPDFLLPFEPRHMFFATPGKHDEVASNVDQFGDSYARDTTSEELSDCPESITKLIERLQESVNSGHEMPCGLLFKSLTILFPHRNDDVSESEAKTSSHPSITHVVIDPESSSKEISSLRGKWSRKPGRKVPHIVTVDWVEESWKSRTLLDEERFQPKRCISGIAKPYWPG</sequence>
<accession>Q4WVG8</accession>
<comment type="function">
    <text evidence="2">DNA ligase involved in DNA non-homologous end joining (NHEJ); required for double-strand break (DSB) repair.</text>
</comment>
<comment type="catalytic activity">
    <reaction evidence="5">
        <text>ATP + (deoxyribonucleotide)n-3'-hydroxyl + 5'-phospho-(deoxyribonucleotide)m = (deoxyribonucleotide)n+m + AMP + diphosphate.</text>
        <dbReference type="EC" id="6.5.1.1"/>
    </reaction>
</comment>
<comment type="cofactor">
    <cofactor evidence="1">
        <name>Mg(2+)</name>
        <dbReference type="ChEBI" id="CHEBI:18420"/>
    </cofactor>
</comment>
<comment type="subcellular location">
    <subcellularLocation>
        <location evidence="2">Nucleus</location>
    </subcellularLocation>
</comment>
<comment type="similarity">
    <text evidence="7">Belongs to the ATP-dependent DNA ligase family.</text>
</comment>
<evidence type="ECO:0000250" key="1">
    <source>
        <dbReference type="UniProtKB" id="P49917"/>
    </source>
</evidence>
<evidence type="ECO:0000250" key="2">
    <source>
        <dbReference type="UniProtKB" id="Q08387"/>
    </source>
</evidence>
<evidence type="ECO:0000255" key="3"/>
<evidence type="ECO:0000255" key="4">
    <source>
        <dbReference type="PROSITE-ProRule" id="PRU00033"/>
    </source>
</evidence>
<evidence type="ECO:0000255" key="5">
    <source>
        <dbReference type="PROSITE-ProRule" id="PRU10135"/>
    </source>
</evidence>
<evidence type="ECO:0000256" key="6">
    <source>
        <dbReference type="SAM" id="MobiDB-lite"/>
    </source>
</evidence>
<evidence type="ECO:0000305" key="7"/>
<organism>
    <name type="scientific">Aspergillus fumigatus (strain ATCC MYA-4609 / CBS 101355 / FGSC A1100 / Af293)</name>
    <name type="common">Neosartorya fumigata</name>
    <dbReference type="NCBI Taxonomy" id="330879"/>
    <lineage>
        <taxon>Eukaryota</taxon>
        <taxon>Fungi</taxon>
        <taxon>Dikarya</taxon>
        <taxon>Ascomycota</taxon>
        <taxon>Pezizomycotina</taxon>
        <taxon>Eurotiomycetes</taxon>
        <taxon>Eurotiomycetidae</taxon>
        <taxon>Eurotiales</taxon>
        <taxon>Aspergillaceae</taxon>
        <taxon>Aspergillus</taxon>
        <taxon>Aspergillus subgen. Fumigati</taxon>
    </lineage>
</organism>
<feature type="chain" id="PRO_0000278375" description="DNA ligase 4">
    <location>
        <begin position="1"/>
        <end position="979"/>
    </location>
</feature>
<feature type="domain" description="BRCT 1" evidence="4">
    <location>
        <begin position="721"/>
        <end position="814"/>
    </location>
</feature>
<feature type="domain" description="BRCT 2" evidence="4">
    <location>
        <begin position="867"/>
        <end position="965"/>
    </location>
</feature>
<feature type="region of interest" description="Disordered" evidence="6">
    <location>
        <begin position="1"/>
        <end position="39"/>
    </location>
</feature>
<feature type="active site" description="N6-AMP-lysine intermediate" evidence="5">
    <location>
        <position position="322"/>
    </location>
</feature>
<feature type="binding site" evidence="1">
    <location>
        <position position="320"/>
    </location>
    <ligand>
        <name>ATP</name>
        <dbReference type="ChEBI" id="CHEBI:30616"/>
    </ligand>
</feature>
<feature type="binding site" evidence="1">
    <location>
        <position position="322"/>
    </location>
    <ligand>
        <name>ATP</name>
        <dbReference type="ChEBI" id="CHEBI:30616"/>
    </ligand>
</feature>
<feature type="binding site" evidence="1">
    <location>
        <position position="323"/>
    </location>
    <ligand>
        <name>ATP</name>
        <dbReference type="ChEBI" id="CHEBI:30616"/>
    </ligand>
</feature>
<feature type="binding site" evidence="1">
    <location>
        <position position="327"/>
    </location>
    <ligand>
        <name>ATP</name>
        <dbReference type="ChEBI" id="CHEBI:30616"/>
    </ligand>
</feature>
<feature type="binding site" evidence="1">
    <location>
        <position position="389"/>
    </location>
    <ligand>
        <name>ATP</name>
        <dbReference type="ChEBI" id="CHEBI:30616"/>
    </ligand>
</feature>
<feature type="binding site" evidence="3">
    <location>
        <position position="389"/>
    </location>
    <ligand>
        <name>Mg(2+)</name>
        <dbReference type="ChEBI" id="CHEBI:18420"/>
        <label>1</label>
    </ligand>
</feature>
<feature type="binding site" evidence="1">
    <location>
        <position position="430"/>
    </location>
    <ligand>
        <name>ATP</name>
        <dbReference type="ChEBI" id="CHEBI:30616"/>
    </ligand>
</feature>
<feature type="binding site" evidence="1">
    <location>
        <position position="490"/>
    </location>
    <ligand>
        <name>ATP</name>
        <dbReference type="ChEBI" id="CHEBI:30616"/>
    </ligand>
</feature>
<feature type="binding site" evidence="3">
    <location>
        <position position="490"/>
    </location>
    <ligand>
        <name>Mg(2+)</name>
        <dbReference type="ChEBI" id="CHEBI:18420"/>
        <label>2</label>
    </ligand>
</feature>
<feature type="binding site" evidence="1">
    <location>
        <position position="495"/>
    </location>
    <ligand>
        <name>ATP</name>
        <dbReference type="ChEBI" id="CHEBI:30616"/>
    </ligand>
</feature>
<feature type="binding site" evidence="1">
    <location>
        <position position="512"/>
    </location>
    <ligand>
        <name>ATP</name>
        <dbReference type="ChEBI" id="CHEBI:30616"/>
    </ligand>
</feature>
<feature type="binding site" evidence="1">
    <location>
        <position position="514"/>
    </location>
    <ligand>
        <name>ATP</name>
        <dbReference type="ChEBI" id="CHEBI:30616"/>
    </ligand>
</feature>
<keyword id="KW-0067">ATP-binding</keyword>
<keyword id="KW-0227">DNA damage</keyword>
<keyword id="KW-0233">DNA recombination</keyword>
<keyword id="KW-0234">DNA repair</keyword>
<keyword id="KW-0436">Ligase</keyword>
<keyword id="KW-0460">Magnesium</keyword>
<keyword id="KW-0479">Metal-binding</keyword>
<keyword id="KW-0547">Nucleotide-binding</keyword>
<keyword id="KW-0539">Nucleus</keyword>
<keyword id="KW-1185">Reference proteome</keyword>
<keyword id="KW-0677">Repeat</keyword>